<reference key="1">
    <citation type="journal article" date="2005" name="J. Bacteriol.">
        <title>Insights on evolution of virulence and resistance from the complete genome analysis of an early methicillin-resistant Staphylococcus aureus strain and a biofilm-producing methicillin-resistant Staphylococcus epidermidis strain.</title>
        <authorList>
            <person name="Gill S.R."/>
            <person name="Fouts D.E."/>
            <person name="Archer G.L."/>
            <person name="Mongodin E.F."/>
            <person name="DeBoy R.T."/>
            <person name="Ravel J."/>
            <person name="Paulsen I.T."/>
            <person name="Kolonay J.F."/>
            <person name="Brinkac L.M."/>
            <person name="Beanan M.J."/>
            <person name="Dodson R.J."/>
            <person name="Daugherty S.C."/>
            <person name="Madupu R."/>
            <person name="Angiuoli S.V."/>
            <person name="Durkin A.S."/>
            <person name="Haft D.H."/>
            <person name="Vamathevan J.J."/>
            <person name="Khouri H."/>
            <person name="Utterback T.R."/>
            <person name="Lee C."/>
            <person name="Dimitrov G."/>
            <person name="Jiang L."/>
            <person name="Qin H."/>
            <person name="Weidman J."/>
            <person name="Tran K."/>
            <person name="Kang K.H."/>
            <person name="Hance I.R."/>
            <person name="Nelson K.E."/>
            <person name="Fraser C.M."/>
        </authorList>
    </citation>
    <scope>NUCLEOTIDE SEQUENCE [LARGE SCALE GENOMIC DNA]</scope>
    <source>
        <strain>COL</strain>
    </source>
</reference>
<organism>
    <name type="scientific">Staphylococcus aureus (strain COL)</name>
    <dbReference type="NCBI Taxonomy" id="93062"/>
    <lineage>
        <taxon>Bacteria</taxon>
        <taxon>Bacillati</taxon>
        <taxon>Bacillota</taxon>
        <taxon>Bacilli</taxon>
        <taxon>Bacillales</taxon>
        <taxon>Staphylococcaceae</taxon>
        <taxon>Staphylococcus</taxon>
    </lineage>
</organism>
<protein>
    <recommendedName>
        <fullName>Alkyl hydroperoxide reductase subunit F</fullName>
        <ecNumber>1.8.1.-</ecNumber>
    </recommendedName>
</protein>
<sequence length="507" mass="54721">MLNADLKQQLKQLLELMEGNVEFVASLGSDDKSKELKDLLTEITDMSPRLSLSEKSLKRTPSFSVNRPGEETGVTFAGIPLGHEFNSLVLAILQVSGRAPKEKQSIIDQIKKLEGSFHFETFISLTCQKCPDVVQALNLMSVINPNITHSMIDGAVFREESENIMAVPAVFLNGEEFGNGRMTIQDILSKLGSTADASEFENKEPYDVLIVGGGPASGSAAIYTARKGLRTGIVADRIGGQVNDTAGIENFITVKETTGSEFSSNLAAHIDQYDIDAMTGIRATDIEKTDEAIKVTLENGAVLESKTVIIATGAGWRKLNIPGEEQLINKGVAFCPHCDGPLFENKDVAVIGGGNSGVEAAIDLAGIVNHVTLFEFASELKADNVLQDRLRSLSNVDIKTNAKTTEVVGEDHVTGIRYEDMNTGEEHLLNLDGIFVQIGLLPNTSWLNDAVELNERGEIVIDRNNNTNVPGIFAAGDVTDQKNKQIIISMGAGANAALNAFDYIIRN</sequence>
<name>AHPF_STAAC</name>
<gene>
    <name type="primary">ahpF</name>
    <name type="ordered locus">SACOL0451</name>
</gene>
<keyword id="KW-1015">Disulfide bond</keyword>
<keyword id="KW-0274">FAD</keyword>
<keyword id="KW-0285">Flavoprotein</keyword>
<keyword id="KW-0520">NAD</keyword>
<keyword id="KW-0521">NADP</keyword>
<keyword id="KW-0560">Oxidoreductase</keyword>
<keyword id="KW-0676">Redox-active center</keyword>
<comment type="function">
    <text evidence="1">Serves to protect the cell against DNA damage by alkyl hydroperoxides. It can use either NADH or NADPH as electron donor for direct reduction of redox dyes or of alkyl hydroperoxides when combined with the AhpC protein (By similarity).</text>
</comment>
<comment type="cofactor">
    <cofactor evidence="1">
        <name>FAD</name>
        <dbReference type="ChEBI" id="CHEBI:57692"/>
    </cofactor>
    <text evidence="1">Binds 1 FAD per subunit.</text>
</comment>
<comment type="subunit">
    <text evidence="1">Homodimer.</text>
</comment>
<comment type="miscellaneous">
    <text>The active site is a redox-active disulfide bond.</text>
</comment>
<comment type="similarity">
    <text evidence="2">Belongs to the class-II pyridine nucleotide-disulfide oxidoreductase family.</text>
</comment>
<dbReference type="EC" id="1.8.1.-"/>
<dbReference type="EMBL" id="CP000046">
    <property type="protein sequence ID" value="AAW38918.1"/>
    <property type="molecule type" value="Genomic_DNA"/>
</dbReference>
<dbReference type="RefSeq" id="WP_000930486.1">
    <property type="nucleotide sequence ID" value="NZ_JBGOFO010000001.1"/>
</dbReference>
<dbReference type="SMR" id="Q5HIR6"/>
<dbReference type="KEGG" id="sac:SACOL0451"/>
<dbReference type="HOGENOM" id="CLU_031864_4_2_9"/>
<dbReference type="Proteomes" id="UP000000530">
    <property type="component" value="Chromosome"/>
</dbReference>
<dbReference type="GO" id="GO:0050660">
    <property type="term" value="F:flavin adenine dinucleotide binding"/>
    <property type="evidence" value="ECO:0007669"/>
    <property type="project" value="InterPro"/>
</dbReference>
<dbReference type="GO" id="GO:0051287">
    <property type="term" value="F:NAD binding"/>
    <property type="evidence" value="ECO:0007669"/>
    <property type="project" value="InterPro"/>
</dbReference>
<dbReference type="GO" id="GO:0102039">
    <property type="term" value="F:NADH-dependent peroxiredoxin activity"/>
    <property type="evidence" value="ECO:0007669"/>
    <property type="project" value="InterPro"/>
</dbReference>
<dbReference type="GO" id="GO:0016668">
    <property type="term" value="F:oxidoreductase activity, acting on a sulfur group of donors, NAD(P) as acceptor"/>
    <property type="evidence" value="ECO:0007669"/>
    <property type="project" value="UniProtKB-ARBA"/>
</dbReference>
<dbReference type="GO" id="GO:0000302">
    <property type="term" value="P:response to reactive oxygen species"/>
    <property type="evidence" value="ECO:0007669"/>
    <property type="project" value="InterPro"/>
</dbReference>
<dbReference type="CDD" id="cd03026">
    <property type="entry name" value="AhpF_NTD_C"/>
    <property type="match status" value="1"/>
</dbReference>
<dbReference type="CDD" id="cd02974">
    <property type="entry name" value="AhpF_NTD_N"/>
    <property type="match status" value="1"/>
</dbReference>
<dbReference type="FunFam" id="3.50.50.60:FF:000007">
    <property type="entry name" value="Alkyl hydroperoxide reductase, F subunit"/>
    <property type="match status" value="1"/>
</dbReference>
<dbReference type="Gene3D" id="3.40.30.80">
    <property type="match status" value="1"/>
</dbReference>
<dbReference type="Gene3D" id="3.50.50.60">
    <property type="entry name" value="FAD/NAD(P)-binding domain"/>
    <property type="match status" value="2"/>
</dbReference>
<dbReference type="InterPro" id="IPR044141">
    <property type="entry name" value="AhpF_NTD_C"/>
</dbReference>
<dbReference type="InterPro" id="IPR044142">
    <property type="entry name" value="AhpF_NTD_N"/>
</dbReference>
<dbReference type="InterPro" id="IPR012081">
    <property type="entry name" value="Alkyl_hydroperoxide_Rdtase_suF"/>
</dbReference>
<dbReference type="InterPro" id="IPR036188">
    <property type="entry name" value="FAD/NAD-bd_sf"/>
</dbReference>
<dbReference type="InterPro" id="IPR023753">
    <property type="entry name" value="FAD/NAD-binding_dom"/>
</dbReference>
<dbReference type="InterPro" id="IPR050097">
    <property type="entry name" value="Ferredoxin-NADP_redctase_2"/>
</dbReference>
<dbReference type="InterPro" id="IPR008255">
    <property type="entry name" value="Pyr_nucl-diS_OxRdtase_2_AS"/>
</dbReference>
<dbReference type="InterPro" id="IPR012336">
    <property type="entry name" value="Thioredoxin-like_fold"/>
</dbReference>
<dbReference type="InterPro" id="IPR036249">
    <property type="entry name" value="Thioredoxin-like_sf"/>
</dbReference>
<dbReference type="NCBIfam" id="TIGR03140">
    <property type="entry name" value="AhpF"/>
    <property type="match status" value="1"/>
</dbReference>
<dbReference type="PANTHER" id="PTHR48105">
    <property type="entry name" value="THIOREDOXIN REDUCTASE 1-RELATED-RELATED"/>
    <property type="match status" value="1"/>
</dbReference>
<dbReference type="Pfam" id="PF07992">
    <property type="entry name" value="Pyr_redox_2"/>
    <property type="match status" value="1"/>
</dbReference>
<dbReference type="Pfam" id="PF13192">
    <property type="entry name" value="Thioredoxin_3"/>
    <property type="match status" value="1"/>
</dbReference>
<dbReference type="PIRSF" id="PIRSF000238">
    <property type="entry name" value="AhpF"/>
    <property type="match status" value="1"/>
</dbReference>
<dbReference type="PRINTS" id="PR00368">
    <property type="entry name" value="FADPNR"/>
</dbReference>
<dbReference type="PRINTS" id="PR00469">
    <property type="entry name" value="PNDRDTASEII"/>
</dbReference>
<dbReference type="SUPFAM" id="SSF51905">
    <property type="entry name" value="FAD/NAD(P)-binding domain"/>
    <property type="match status" value="1"/>
</dbReference>
<dbReference type="SUPFAM" id="SSF52833">
    <property type="entry name" value="Thioredoxin-like"/>
    <property type="match status" value="2"/>
</dbReference>
<dbReference type="PROSITE" id="PS51354">
    <property type="entry name" value="GLUTAREDOXIN_2"/>
    <property type="match status" value="1"/>
</dbReference>
<dbReference type="PROSITE" id="PS00573">
    <property type="entry name" value="PYRIDINE_REDOX_2"/>
    <property type="match status" value="1"/>
</dbReference>
<accession>Q5HIR6</accession>
<proteinExistence type="inferred from homology"/>
<evidence type="ECO:0000250" key="1"/>
<evidence type="ECO:0000305" key="2"/>
<feature type="chain" id="PRO_0000166778" description="Alkyl hydroperoxide reductase subunit F">
    <location>
        <begin position="1"/>
        <end position="507"/>
    </location>
</feature>
<feature type="binding site" evidence="1">
    <location>
        <begin position="207"/>
        <end position="222"/>
    </location>
    <ligand>
        <name>FAD</name>
        <dbReference type="ChEBI" id="CHEBI:57692"/>
    </ligand>
</feature>
<feature type="binding site" evidence="1">
    <location>
        <begin position="347"/>
        <end position="361"/>
    </location>
    <ligand>
        <name>NAD(+)</name>
        <dbReference type="ChEBI" id="CHEBI:57540"/>
    </ligand>
</feature>
<feature type="binding site" evidence="1">
    <location>
        <begin position="467"/>
        <end position="477"/>
    </location>
    <ligand>
        <name>FAD</name>
        <dbReference type="ChEBI" id="CHEBI:57692"/>
    </ligand>
</feature>
<feature type="disulfide bond" description="Redox-active" evidence="1">
    <location>
        <begin position="335"/>
        <end position="338"/>
    </location>
</feature>